<gene>
    <name evidence="2" type="primary">EIF4G2</name>
    <name evidence="2" type="synonym">NAT1</name>
</gene>
<comment type="function">
    <text evidence="1 6">Appears to play a role in the switch from cap-dependent to IRES-mediated translation during mitosis, apoptosis and viral infection. Cleaved by some caspases and viral proteases.</text>
</comment>
<comment type="subunit">
    <text evidence="1">Interacts with the serine/threonine protein kinases MKNK1 and MKNK2. Binds EIF4A and EIF3. Interacts with MIF4GD (By similarity). Interacts with DAZAP2 (By similarity).</text>
</comment>
<comment type="PTM">
    <text evidence="1">Phosphorylation; hyperphosphorylated during mitosis.</text>
</comment>
<comment type="miscellaneous">
    <text>This gene has been shown to be extensively edited in the liver of APOBEC1 transgenic animals. Its aberrant editing could contribute to the potent oncogenesis induced by overexpression of APOBEC1. The aberrant edited sequence, called NAT1, is likely to be a fundamental translational repressor.</text>
</comment>
<comment type="similarity">
    <text evidence="7">Belongs to the eukaryotic initiation factor 4G family.</text>
</comment>
<feature type="chain" id="PRO_0000213327" description="Eukaryotic translation initiation factor 4 gamma 2">
    <location>
        <begin position="1"/>
        <end position="907"/>
    </location>
</feature>
<feature type="domain" description="MIF4G" evidence="4">
    <location>
        <begin position="78"/>
        <end position="308"/>
    </location>
</feature>
<feature type="domain" description="MI" evidence="4">
    <location>
        <begin position="543"/>
        <end position="666"/>
    </location>
</feature>
<feature type="domain" description="W2" evidence="3">
    <location>
        <begin position="720"/>
        <end position="904"/>
    </location>
</feature>
<feature type="region of interest" description="Disordered" evidence="5">
    <location>
        <begin position="1"/>
        <end position="71"/>
    </location>
</feature>
<feature type="region of interest" description="Disordered" evidence="5">
    <location>
        <begin position="498"/>
        <end position="541"/>
    </location>
</feature>
<feature type="compositionally biased region" description="Polar residues" evidence="5">
    <location>
        <begin position="503"/>
        <end position="516"/>
    </location>
</feature>
<feature type="modified residue" description="N-acetylmethionine" evidence="1">
    <location>
        <position position="1"/>
    </location>
</feature>
<feature type="modified residue" description="Phosphoserine" evidence="1">
    <location>
        <position position="11"/>
    </location>
</feature>
<feature type="modified residue" description="Phosphothreonine" evidence="1">
    <location>
        <position position="89"/>
    </location>
</feature>
<feature type="modified residue" description="Omega-N-methylarginine" evidence="1">
    <location>
        <position position="360"/>
    </location>
</feature>
<feature type="modified residue" description="Phosphoserine" evidence="1">
    <location>
        <position position="395"/>
    </location>
</feature>
<feature type="modified residue" description="N6-methyllysine" evidence="1">
    <location>
        <position position="431"/>
    </location>
</feature>
<feature type="modified residue" description="Phosphoserine" evidence="1">
    <location>
        <position position="443"/>
    </location>
</feature>
<feature type="modified residue" description="Omega-N-methylarginine" evidence="1">
    <location>
        <position position="505"/>
    </location>
</feature>
<feature type="modified residue" description="Phosphothreonine" evidence="1">
    <location>
        <position position="508"/>
    </location>
</feature>
<feature type="modified residue" description="Phosphothreonine" evidence="1">
    <location>
        <position position="514"/>
    </location>
</feature>
<feature type="modified residue" description="Phosphoserine" evidence="1">
    <location>
        <position position="902"/>
    </location>
</feature>
<feature type="cross-link" description="Glycyl lysine isopeptide (Lys-Gly) (interchain with G-Cter in SUMO2)" evidence="1">
    <location>
        <position position="575"/>
    </location>
</feature>
<accession>P79398</accession>
<proteinExistence type="evidence at transcript level"/>
<name>IF4G2_RABIT</name>
<keyword id="KW-0007">Acetylation</keyword>
<keyword id="KW-0396">Initiation factor</keyword>
<keyword id="KW-1017">Isopeptide bond</keyword>
<keyword id="KW-0488">Methylation</keyword>
<keyword id="KW-0597">Phosphoprotein</keyword>
<keyword id="KW-0648">Protein biosynthesis</keyword>
<keyword id="KW-1185">Reference proteome</keyword>
<keyword id="KW-0678">Repressor</keyword>
<keyword id="KW-0810">Translation regulation</keyword>
<keyword id="KW-0832">Ubl conjugation</keyword>
<organism>
    <name type="scientific">Oryctolagus cuniculus</name>
    <name type="common">Rabbit</name>
    <dbReference type="NCBI Taxonomy" id="9986"/>
    <lineage>
        <taxon>Eukaryota</taxon>
        <taxon>Metazoa</taxon>
        <taxon>Chordata</taxon>
        <taxon>Craniata</taxon>
        <taxon>Vertebrata</taxon>
        <taxon>Euteleostomi</taxon>
        <taxon>Mammalia</taxon>
        <taxon>Eutheria</taxon>
        <taxon>Euarchontoglires</taxon>
        <taxon>Glires</taxon>
        <taxon>Lagomorpha</taxon>
        <taxon>Leporidae</taxon>
        <taxon>Oryctolagus</taxon>
    </lineage>
</organism>
<protein>
    <recommendedName>
        <fullName>Eukaryotic translation initiation factor 4 gamma 2</fullName>
        <shortName>eIF-4-gamma 2</shortName>
        <shortName>eIF-4G 2</shortName>
        <shortName>eIF4G 2</shortName>
    </recommendedName>
    <alternativeName>
        <fullName>Novel APOBEC-1 target 1</fullName>
    </alternativeName>
    <alternativeName>
        <fullName>Translation repressor NAT1</fullName>
    </alternativeName>
    <alternativeName>
        <fullName>p97</fullName>
    </alternativeName>
</protein>
<sequence>MESAIAEGGASRFSASSGGGGSRGAPQHYPKTAGNSEFLGKTPGQNAQKWIPARSTRRDDNSAANNSANEKERHDAIFRKVRGILNKLTPEKFDKLCLELLNVGVESKLILKGVILLIVDKALEEPKYSSLYAQLCLRLAEDAPNFDGPAAEGQPGQKQSTTFRRLLISKLQDEFENRTRNVDVYDKRENPLLPEEEEQRAIAKIKMLGNIKFIGELGKLDLIHESILHKCIKTLLEKKKRVQLQDMGEDLECLCQIMRTVGPRLDHERAKSLMDQYFARMCSLMLSKELPARIRFLLQDTVELREHHWVPRKAFLDNGPKTINQIRQDAVKDLGVFIPAPMAQGMRSDFFLEGPFMPPRMKMDRDPLGGLADMFGQMPGSGIGTGPGVIQDRFSPTMGRHRSNQLFNGHGGHIMPPTQSQFGEMGGKFMKSQGLSQLYHNQSQGLLSQLQGQSKDMPPRFSKKGQLNADEISLRPAQSFLMNKNQVPKLQPQITMIPPSAQPPRTQTPPLGQTPQLGLKTNPPLIQEKPAKTSKKPPPSKEELLKLTETVVTEYLNSGNANEAVNGVKEMRAPKHFLPEMLSKVIILSLDRSDEDKEKASSLISLLKQEGIGTSDNFMQAFLNVLDQCPKLEVDIPLVKSYLAQFAARAIISELVSISELAQPLESGTHFPLFLLCLQQLAKLQDREWLTELFQQSKVNMQKMLPEIDQNKDRMLEILEGKGLSFLFPLLKLEKELLKQIKLDPSPQTIYKWIKDNISPKLHVDKGFVNILMTSFLQYISSEVNPPSDETDSSSAPSKEQLEQEKQLLLSFKPVMQKFLHDHVDLQVSALYALQVHCYNSNFPKGMLLRFFVHFYDMEIIEEEAFLAWKEDITQEFPGKGKALFQVNQWLTWLETAEEEESEEEAD</sequence>
<evidence type="ECO:0000250" key="1">
    <source>
        <dbReference type="UniProtKB" id="P78344"/>
    </source>
</evidence>
<evidence type="ECO:0000250" key="2">
    <source>
        <dbReference type="UniProtKB" id="Q62448"/>
    </source>
</evidence>
<evidence type="ECO:0000255" key="3">
    <source>
        <dbReference type="PROSITE-ProRule" id="PRU00695"/>
    </source>
</evidence>
<evidence type="ECO:0000255" key="4">
    <source>
        <dbReference type="PROSITE-ProRule" id="PRU00698"/>
    </source>
</evidence>
<evidence type="ECO:0000256" key="5">
    <source>
        <dbReference type="SAM" id="MobiDB-lite"/>
    </source>
</evidence>
<evidence type="ECO:0000269" key="6">
    <source>
    </source>
</evidence>
<evidence type="ECO:0000305" key="7"/>
<dbReference type="EMBL" id="U76113">
    <property type="protein sequence ID" value="AAC48705.1"/>
    <property type="molecule type" value="mRNA"/>
</dbReference>
<dbReference type="RefSeq" id="NP_001075848.2">
    <property type="nucleotide sequence ID" value="NM_001082379.2"/>
</dbReference>
<dbReference type="SMR" id="P79398"/>
<dbReference type="FunCoup" id="P79398">
    <property type="interactions" value="2078"/>
</dbReference>
<dbReference type="STRING" id="9986.ENSOCUP00000046928"/>
<dbReference type="PaxDb" id="9986-ENSOCUP00000011474"/>
<dbReference type="GeneID" id="100009236"/>
<dbReference type="KEGG" id="ocu:100009236"/>
<dbReference type="CTD" id="1982"/>
<dbReference type="eggNOG" id="KOG0401">
    <property type="taxonomic scope" value="Eukaryota"/>
</dbReference>
<dbReference type="InParanoid" id="P79398"/>
<dbReference type="OrthoDB" id="514777at2759"/>
<dbReference type="Proteomes" id="UP000001811">
    <property type="component" value="Unplaced"/>
</dbReference>
<dbReference type="GO" id="GO:0016281">
    <property type="term" value="C:eukaryotic translation initiation factor 4F complex"/>
    <property type="evidence" value="ECO:0000250"/>
    <property type="project" value="UniProtKB"/>
</dbReference>
<dbReference type="GO" id="GO:0003729">
    <property type="term" value="F:mRNA binding"/>
    <property type="evidence" value="ECO:0007669"/>
    <property type="project" value="TreeGrafter"/>
</dbReference>
<dbReference type="GO" id="GO:0008135">
    <property type="term" value="F:translation factor activity, RNA binding"/>
    <property type="evidence" value="ECO:0000250"/>
    <property type="project" value="UniProtKB"/>
</dbReference>
<dbReference type="GO" id="GO:0003743">
    <property type="term" value="F:translation initiation factor activity"/>
    <property type="evidence" value="ECO:0000314"/>
    <property type="project" value="UniProtKB"/>
</dbReference>
<dbReference type="GO" id="GO:0006446">
    <property type="term" value="P:regulation of translational initiation"/>
    <property type="evidence" value="ECO:0000314"/>
    <property type="project" value="UniProtKB"/>
</dbReference>
<dbReference type="CDD" id="cd11559">
    <property type="entry name" value="W2_eIF4G1_like"/>
    <property type="match status" value="1"/>
</dbReference>
<dbReference type="FunFam" id="1.25.40.180:FF:000007">
    <property type="entry name" value="Eukaryotic translation initiation factor 4 gamma 2"/>
    <property type="match status" value="1"/>
</dbReference>
<dbReference type="FunFam" id="1.25.40.180:FF:000011">
    <property type="entry name" value="Eukaryotic translation initiation factor 4 gamma 2"/>
    <property type="match status" value="1"/>
</dbReference>
<dbReference type="FunFam" id="1.25.40.180:FF:000017">
    <property type="entry name" value="Eukaryotic translation initiation factor 4 gamma 2"/>
    <property type="match status" value="1"/>
</dbReference>
<dbReference type="Gene3D" id="1.25.40.180">
    <property type="match status" value="3"/>
</dbReference>
<dbReference type="InterPro" id="IPR016024">
    <property type="entry name" value="ARM-type_fold"/>
</dbReference>
<dbReference type="InterPro" id="IPR003891">
    <property type="entry name" value="Initiation_fac_eIF4g_MI"/>
</dbReference>
<dbReference type="InterPro" id="IPR003890">
    <property type="entry name" value="MIF4G-like_typ-3"/>
</dbReference>
<dbReference type="InterPro" id="IPR003307">
    <property type="entry name" value="W2_domain"/>
</dbReference>
<dbReference type="PANTHER" id="PTHR23253">
    <property type="entry name" value="EUKARYOTIC TRANSLATION INITIATION FACTOR 4 GAMMA"/>
    <property type="match status" value="1"/>
</dbReference>
<dbReference type="PANTHER" id="PTHR23253:SF9">
    <property type="entry name" value="EUKARYOTIC TRANSLATION INITIATION FACTOR 4 GAMMA 2"/>
    <property type="match status" value="1"/>
</dbReference>
<dbReference type="Pfam" id="PF02847">
    <property type="entry name" value="MA3"/>
    <property type="match status" value="1"/>
</dbReference>
<dbReference type="Pfam" id="PF02854">
    <property type="entry name" value="MIF4G"/>
    <property type="match status" value="1"/>
</dbReference>
<dbReference type="Pfam" id="PF02020">
    <property type="entry name" value="W2"/>
    <property type="match status" value="1"/>
</dbReference>
<dbReference type="SMART" id="SM00515">
    <property type="entry name" value="eIF5C"/>
    <property type="match status" value="1"/>
</dbReference>
<dbReference type="SMART" id="SM00544">
    <property type="entry name" value="MA3"/>
    <property type="match status" value="1"/>
</dbReference>
<dbReference type="SMART" id="SM00543">
    <property type="entry name" value="MIF4G"/>
    <property type="match status" value="1"/>
</dbReference>
<dbReference type="SUPFAM" id="SSF48371">
    <property type="entry name" value="ARM repeat"/>
    <property type="match status" value="3"/>
</dbReference>
<dbReference type="PROSITE" id="PS51366">
    <property type="entry name" value="MI"/>
    <property type="match status" value="1"/>
</dbReference>
<dbReference type="PROSITE" id="PS51363">
    <property type="entry name" value="W2"/>
    <property type="match status" value="1"/>
</dbReference>
<reference evidence="7" key="1">
    <citation type="journal article" date="1997" name="Genes Dev.">
        <title>A novel translational repressor mRNA is edited extensively in livers containing tumors caused by the transgene expression of the apoB mRNA-editing enzyme.</title>
        <authorList>
            <person name="Yamanaka S."/>
            <person name="Poksay K.S."/>
            <person name="Arnold K.S."/>
            <person name="Innerarity T.L."/>
        </authorList>
    </citation>
    <scope>NUCLEOTIDE SEQUENCE [MRNA]</scope>
    <scope>FUNCTION</scope>
</reference>